<keyword id="KW-1003">Cell membrane</keyword>
<keyword id="KW-0256">Endoplasmic reticulum</keyword>
<keyword id="KW-0325">Glycoprotein</keyword>
<keyword id="KW-0328">Glycosyltransferase</keyword>
<keyword id="KW-0333">Golgi apparatus</keyword>
<keyword id="KW-1017">Isopeptide bond</keyword>
<keyword id="KW-0458">Lysosome</keyword>
<keyword id="KW-0472">Membrane</keyword>
<keyword id="KW-0597">Phosphoprotein</keyword>
<keyword id="KW-1185">Reference proteome</keyword>
<keyword id="KW-0808">Transferase</keyword>
<keyword id="KW-0812">Transmembrane</keyword>
<keyword id="KW-1133">Transmembrane helix</keyword>
<keyword id="KW-0832">Ubl conjugation</keyword>
<proteinExistence type="evidence at transcript level"/>
<evidence type="ECO:0000250" key="1">
    <source>
        <dbReference type="UniProtKB" id="P70312"/>
    </source>
</evidence>
<evidence type="ECO:0000250" key="2">
    <source>
        <dbReference type="UniProtKB" id="Q92819"/>
    </source>
</evidence>
<evidence type="ECO:0000255" key="3"/>
<evidence type="ECO:0000305" key="4"/>
<comment type="function">
    <text evidence="1 2">Catalyzes the addition of GlcNAc or GlcUA monosaccharides to the nascent hyaluronan polymer. Therefore, it is essential to hyaluronan synthesis a major component of most extracellular matrices that has a structural role in tissues architectures and regulates cell adhesion, migration and differentiation (By similarity). This is one of three isoenzymes responsible for cellular hyaluronan synthesis and it is particularly responsible for the synthesis of high molecular mass hyaluronan (By similarity).</text>
</comment>
<comment type="catalytic activity">
    <reaction evidence="2">
        <text>[hyaluronan](n) + UDP-N-acetyl-alpha-D-glucosamine = N-acetyl-beta-D-glucosaminyl-(1-&gt;4)-[hyaluronan](n) + UDP + H(+)</text>
        <dbReference type="Rhea" id="RHEA:20465"/>
        <dbReference type="Rhea" id="RHEA-COMP:12583"/>
        <dbReference type="Rhea" id="RHEA-COMP:12585"/>
        <dbReference type="ChEBI" id="CHEBI:15378"/>
        <dbReference type="ChEBI" id="CHEBI:57705"/>
        <dbReference type="ChEBI" id="CHEBI:58223"/>
        <dbReference type="ChEBI" id="CHEBI:132153"/>
        <dbReference type="ChEBI" id="CHEBI:132154"/>
        <dbReference type="EC" id="2.4.1.212"/>
    </reaction>
    <physiologicalReaction direction="left-to-right" evidence="2">
        <dbReference type="Rhea" id="RHEA:20466"/>
    </physiologicalReaction>
</comment>
<comment type="catalytic activity">
    <reaction evidence="2">
        <text>N-acetyl-beta-D-glucosaminyl-(1-&gt;4)-[hyaluronan](n) + UDP-alpha-D-glucuronate = [hyaluronan](n+1) + UDP + H(+)</text>
        <dbReference type="Rhea" id="RHEA:12528"/>
        <dbReference type="Rhea" id="RHEA-COMP:12585"/>
        <dbReference type="Rhea" id="RHEA-COMP:12587"/>
        <dbReference type="ChEBI" id="CHEBI:15378"/>
        <dbReference type="ChEBI" id="CHEBI:58052"/>
        <dbReference type="ChEBI" id="CHEBI:58223"/>
        <dbReference type="ChEBI" id="CHEBI:132153"/>
        <dbReference type="ChEBI" id="CHEBI:132154"/>
        <dbReference type="EC" id="2.4.1.212"/>
    </reaction>
    <physiologicalReaction direction="left-to-right" evidence="2">
        <dbReference type="Rhea" id="RHEA:12529"/>
    </physiologicalReaction>
</comment>
<comment type="cofactor">
    <cofactor>
        <name>Mg(2+)</name>
        <dbReference type="ChEBI" id="CHEBI:18420"/>
    </cofactor>
</comment>
<comment type="pathway">
    <text evidence="2">Glycan biosynthesis; hyaluronan biosynthesis.</text>
</comment>
<comment type="subunit">
    <text evidence="2">Homodimer; dimerization promotes enzymatic activity. Forms heterodimer with HAS3. Forms heterodimer with HAS1.</text>
</comment>
<comment type="subcellular location">
    <subcellularLocation>
        <location evidence="2">Cell membrane</location>
        <topology evidence="3">Multi-pass membrane protein</topology>
    </subcellularLocation>
    <subcellularLocation>
        <location evidence="2">Endoplasmic reticulum membrane</location>
        <topology evidence="3">Multi-pass membrane protein</topology>
    </subcellularLocation>
    <subcellularLocation>
        <location evidence="2">Vesicle</location>
    </subcellularLocation>
    <subcellularLocation>
        <location evidence="2">Golgi apparatus membrane</location>
        <topology evidence="3">Multi-pass membrane protein</topology>
    </subcellularLocation>
    <subcellularLocation>
        <location evidence="2">Lysosome</location>
    </subcellularLocation>
    <text evidence="2">Travels from endoplasmic reticulum (ER), Golgi to plasma membrane and either back to endosomes and lysosomes, or out into extracellular vesicles. Post-translational modifications control HAS2 trafficking.</text>
</comment>
<comment type="PTM">
    <text evidence="2">Phosphorylation at Thr-328 is essential for hyaluronan synthase activity.</text>
</comment>
<comment type="PTM">
    <text evidence="2">O-GlcNAcylation at Ser-221 increases the stability of HAS2 and plasma membrane localization.</text>
</comment>
<comment type="PTM">
    <text evidence="2">Ubiquitination at Lys-190; this ubiquitination is essential for hyaluronan synthase activity and homo- or hetero-oligomerization. Can also be poly-ubiquitinated. Deubiquitinated by USP17L22/USP17 and USP4. USP17L22/USP17 efficiently removes 'Lys-63'- and 'Lys-48'-linked polyubiquitin chains, whereas USP4 preferentially removes monoubiquitination and, partially, both 'Lys-63'- and 'Lys-48'-linked polyubiquitin chain.</text>
</comment>
<comment type="similarity">
    <text evidence="4">Belongs to the NodC/HAS family.</text>
</comment>
<reference key="1">
    <citation type="submission" date="1997-06" db="EMBL/GenBank/DDBJ databases">
        <title>Molecular cloning of rat hyaluronan synthase 2 and regulation of its expression in a rat osteoblastic cell line.</title>
        <authorList>
            <person name="Sakaguchi K."/>
            <person name="Midura R.J."/>
        </authorList>
    </citation>
    <scope>NUCLEOTIDE SEQUENCE [MRNA]</scope>
</reference>
<sequence>MHCERFLCVLRIIGTTLFGVSLLLGITAAYIVGYQFIQTDNYYFSFGLYGAFLASHLIIQSLFAFLEHRKMKKSLETPIKLNKTVALCIAAYQEDPDYLRKCLQSVKRLTYPGIKVVMVIDGNSDDDLYMMDIFSEVMGRDKSVTYIWKNNFHERGPGETEESHKESSQHVTQLVLSNKSICIMQKWGGKREVMYTAFRALGRSVDYVQVCDSDTMLDPASSVEMVKVLEEDPMVGGVGGDVQILNKYDSWISFLSSVRYWMAFNIERACQSYFGCVQCISGPLGMYRNSLLHEFVEDWYNQEFMGNQCSFGDDRHLTNRVLSLGYATKYTARSKCLTETPIEYLRWLNQQTRWSKSYFREWLYNAMWFHKHHLWMTYEAVITGFFPFFLIATVIQLFYRGKIWNILLFLLTVQLVGLIKSSFASCLRGNIVMVFMSLYSVLYMSSLLPAKMFAIATINKAGWGTSGRKTIVVNFIGLIPVSVWFTILLGGVIFTIYKESKKPFSESKQTVLIVGTLIYACYWVVLLTLYVVLINKCGRRKKGQQYDMVLDV</sequence>
<accession>O35776</accession>
<dbReference type="EC" id="2.4.1.212" evidence="2"/>
<dbReference type="EMBL" id="AF008201">
    <property type="protein sequence ID" value="AAB63209.1"/>
    <property type="molecule type" value="mRNA"/>
</dbReference>
<dbReference type="RefSeq" id="NP_037285.1">
    <property type="nucleotide sequence ID" value="NM_013153.2"/>
</dbReference>
<dbReference type="SMR" id="O35776"/>
<dbReference type="FunCoup" id="O35776">
    <property type="interactions" value="89"/>
</dbReference>
<dbReference type="STRING" id="10116.ENSRNOP00000006517"/>
<dbReference type="CAZy" id="GT2">
    <property type="family name" value="Glycosyltransferase Family 2"/>
</dbReference>
<dbReference type="GlyCosmos" id="O35776">
    <property type="glycosylation" value="1 site, No reported glycans"/>
</dbReference>
<dbReference type="GlyGen" id="O35776">
    <property type="glycosylation" value="1 site"/>
</dbReference>
<dbReference type="PhosphoSitePlus" id="O35776"/>
<dbReference type="PaxDb" id="10116-ENSRNOP00000006517"/>
<dbReference type="Ensembl" id="ENSRNOT00000006517.5">
    <property type="protein sequence ID" value="ENSRNOP00000006517.4"/>
    <property type="gene ID" value="ENSRNOG00000004854.5"/>
</dbReference>
<dbReference type="GeneID" id="25694"/>
<dbReference type="KEGG" id="rno:25694"/>
<dbReference type="AGR" id="RGD:2781"/>
<dbReference type="CTD" id="3037"/>
<dbReference type="RGD" id="2781">
    <property type="gene designation" value="Has2"/>
</dbReference>
<dbReference type="eggNOG" id="KOG2571">
    <property type="taxonomic scope" value="Eukaryota"/>
</dbReference>
<dbReference type="GeneTree" id="ENSGT00390000010337"/>
<dbReference type="HOGENOM" id="CLU_029695_3_0_1"/>
<dbReference type="InParanoid" id="O35776"/>
<dbReference type="OMA" id="KSATYVW"/>
<dbReference type="OrthoDB" id="9876900at2759"/>
<dbReference type="PhylomeDB" id="O35776"/>
<dbReference type="TreeFam" id="TF332506"/>
<dbReference type="BRENDA" id="2.4.1.212">
    <property type="organism ID" value="5301"/>
</dbReference>
<dbReference type="Reactome" id="R-RNO-2142850">
    <property type="pathway name" value="Hyaluronan biosynthesis and export"/>
</dbReference>
<dbReference type="UniPathway" id="UPA00341"/>
<dbReference type="PRO" id="PR:O35776"/>
<dbReference type="Proteomes" id="UP000002494">
    <property type="component" value="Chromosome 7"/>
</dbReference>
<dbReference type="Bgee" id="ENSRNOG00000004854">
    <property type="expression patterns" value="Expressed in quadriceps femoris and 10 other cell types or tissues"/>
</dbReference>
<dbReference type="GO" id="GO:0005737">
    <property type="term" value="C:cytoplasm"/>
    <property type="evidence" value="ECO:0000266"/>
    <property type="project" value="RGD"/>
</dbReference>
<dbReference type="GO" id="GO:0031410">
    <property type="term" value="C:cytoplasmic vesicle"/>
    <property type="evidence" value="ECO:0000266"/>
    <property type="project" value="RGD"/>
</dbReference>
<dbReference type="GO" id="GO:0005789">
    <property type="term" value="C:endoplasmic reticulum membrane"/>
    <property type="evidence" value="ECO:0000266"/>
    <property type="project" value="RGD"/>
</dbReference>
<dbReference type="GO" id="GO:1903561">
    <property type="term" value="C:extracellular vesicle"/>
    <property type="evidence" value="ECO:0000250"/>
    <property type="project" value="UniProtKB"/>
</dbReference>
<dbReference type="GO" id="GO:0005794">
    <property type="term" value="C:Golgi apparatus"/>
    <property type="evidence" value="ECO:0000250"/>
    <property type="project" value="UniProtKB"/>
</dbReference>
<dbReference type="GO" id="GO:0000139">
    <property type="term" value="C:Golgi membrane"/>
    <property type="evidence" value="ECO:0007669"/>
    <property type="project" value="UniProtKB-SubCell"/>
</dbReference>
<dbReference type="GO" id="GO:0005764">
    <property type="term" value="C:lysosome"/>
    <property type="evidence" value="ECO:0007669"/>
    <property type="project" value="UniProtKB-SubCell"/>
</dbReference>
<dbReference type="GO" id="GO:0005886">
    <property type="term" value="C:plasma membrane"/>
    <property type="evidence" value="ECO:0000250"/>
    <property type="project" value="UniProtKB"/>
</dbReference>
<dbReference type="GO" id="GO:0044853">
    <property type="term" value="C:plasma membrane raft"/>
    <property type="evidence" value="ECO:0000266"/>
    <property type="project" value="RGD"/>
</dbReference>
<dbReference type="GO" id="GO:0050501">
    <property type="term" value="F:hyaluronan synthase activity"/>
    <property type="evidence" value="ECO:0000314"/>
    <property type="project" value="UniProtKB"/>
</dbReference>
<dbReference type="GO" id="GO:0042802">
    <property type="term" value="F:identical protein binding"/>
    <property type="evidence" value="ECO:0000266"/>
    <property type="project" value="RGD"/>
</dbReference>
<dbReference type="GO" id="GO:0036302">
    <property type="term" value="P:atrioventricular canal development"/>
    <property type="evidence" value="ECO:0000250"/>
    <property type="project" value="UniProtKB"/>
</dbReference>
<dbReference type="GO" id="GO:0060349">
    <property type="term" value="P:bone morphogenesis"/>
    <property type="evidence" value="ECO:0000266"/>
    <property type="project" value="RGD"/>
</dbReference>
<dbReference type="GO" id="GO:0071498">
    <property type="term" value="P:cellular response to fluid shear stress"/>
    <property type="evidence" value="ECO:0000266"/>
    <property type="project" value="RGD"/>
</dbReference>
<dbReference type="GO" id="GO:0071347">
    <property type="term" value="P:cellular response to interleukin-1"/>
    <property type="evidence" value="ECO:0000266"/>
    <property type="project" value="RGD"/>
</dbReference>
<dbReference type="GO" id="GO:0036120">
    <property type="term" value="P:cellular response to platelet-derived growth factor stimulus"/>
    <property type="evidence" value="ECO:0000266"/>
    <property type="project" value="RGD"/>
</dbReference>
<dbReference type="GO" id="GO:0071356">
    <property type="term" value="P:cellular response to tumor necrosis factor"/>
    <property type="evidence" value="ECO:0000266"/>
    <property type="project" value="RGD"/>
</dbReference>
<dbReference type="GO" id="GO:0090500">
    <property type="term" value="P:endocardial cushion to mesenchymal transition"/>
    <property type="evidence" value="ECO:0000250"/>
    <property type="project" value="UniProtKB"/>
</dbReference>
<dbReference type="GO" id="GO:0044849">
    <property type="term" value="P:estrous cycle"/>
    <property type="evidence" value="ECO:0000270"/>
    <property type="project" value="RGD"/>
</dbReference>
<dbReference type="GO" id="GO:0085029">
    <property type="term" value="P:extracellular matrix assembly"/>
    <property type="evidence" value="ECO:0000250"/>
    <property type="project" value="UniProtKB"/>
</dbReference>
<dbReference type="GO" id="GO:0030213">
    <property type="term" value="P:hyaluronan biosynthetic process"/>
    <property type="evidence" value="ECO:0000270"/>
    <property type="project" value="UniProtKB"/>
</dbReference>
<dbReference type="GO" id="GO:0030212">
    <property type="term" value="P:hyaluronan metabolic process"/>
    <property type="evidence" value="ECO:0000266"/>
    <property type="project" value="RGD"/>
</dbReference>
<dbReference type="GO" id="GO:0001822">
    <property type="term" value="P:kidney development"/>
    <property type="evidence" value="ECO:0000270"/>
    <property type="project" value="UniProtKB"/>
</dbReference>
<dbReference type="GO" id="GO:0000271">
    <property type="term" value="P:polysaccharide biosynthetic process"/>
    <property type="evidence" value="ECO:0000250"/>
    <property type="project" value="UniProtKB"/>
</dbReference>
<dbReference type="GO" id="GO:0030335">
    <property type="term" value="P:positive regulation of cell migration"/>
    <property type="evidence" value="ECO:0000266"/>
    <property type="project" value="RGD"/>
</dbReference>
<dbReference type="GO" id="GO:0008284">
    <property type="term" value="P:positive regulation of cell population proliferation"/>
    <property type="evidence" value="ECO:0000266"/>
    <property type="project" value="RGD"/>
</dbReference>
<dbReference type="GO" id="GO:1900127">
    <property type="term" value="P:positive regulation of hyaluronan biosynthetic process"/>
    <property type="evidence" value="ECO:0000314"/>
    <property type="project" value="RGD"/>
</dbReference>
<dbReference type="GO" id="GO:0051549">
    <property type="term" value="P:positive regulation of keratinocyte migration"/>
    <property type="evidence" value="ECO:0000314"/>
    <property type="project" value="RGD"/>
</dbReference>
<dbReference type="GO" id="GO:0010838">
    <property type="term" value="P:positive regulation of keratinocyte proliferation"/>
    <property type="evidence" value="ECO:0000315"/>
    <property type="project" value="RGD"/>
</dbReference>
<dbReference type="GO" id="GO:1900625">
    <property type="term" value="P:positive regulation of monocyte aggregation"/>
    <property type="evidence" value="ECO:0000266"/>
    <property type="project" value="RGD"/>
</dbReference>
<dbReference type="GO" id="GO:0014911">
    <property type="term" value="P:positive regulation of smooth muscle cell migration"/>
    <property type="evidence" value="ECO:0000315"/>
    <property type="project" value="RGD"/>
</dbReference>
<dbReference type="GO" id="GO:1900026">
    <property type="term" value="P:positive regulation of substrate adhesion-dependent cell spreading"/>
    <property type="evidence" value="ECO:0000315"/>
    <property type="project" value="RGD"/>
</dbReference>
<dbReference type="GO" id="GO:0035810">
    <property type="term" value="P:positive regulation of urine volume"/>
    <property type="evidence" value="ECO:0000270"/>
    <property type="project" value="UniProtKB"/>
</dbReference>
<dbReference type="GO" id="GO:1901201">
    <property type="term" value="P:regulation of extracellular matrix assembly"/>
    <property type="evidence" value="ECO:0000315"/>
    <property type="project" value="RGD"/>
</dbReference>
<dbReference type="GO" id="GO:0070295">
    <property type="term" value="P:renal water absorption"/>
    <property type="evidence" value="ECO:0000270"/>
    <property type="project" value="UniProtKB"/>
</dbReference>
<dbReference type="GO" id="GO:0001570">
    <property type="term" value="P:vasculogenesis"/>
    <property type="evidence" value="ECO:0000250"/>
    <property type="project" value="UniProtKB"/>
</dbReference>
<dbReference type="CDD" id="cd06434">
    <property type="entry name" value="GT2_HAS"/>
    <property type="match status" value="1"/>
</dbReference>
<dbReference type="Gene3D" id="3.90.550.10">
    <property type="entry name" value="Spore Coat Polysaccharide Biosynthesis Protein SpsA, Chain A"/>
    <property type="match status" value="1"/>
</dbReference>
<dbReference type="InterPro" id="IPR001173">
    <property type="entry name" value="Glyco_trans_2-like"/>
</dbReference>
<dbReference type="InterPro" id="IPR029044">
    <property type="entry name" value="Nucleotide-diphossugar_trans"/>
</dbReference>
<dbReference type="PANTHER" id="PTHR22913">
    <property type="entry name" value="HYALURONAN SYNTHASE"/>
    <property type="match status" value="1"/>
</dbReference>
<dbReference type="PANTHER" id="PTHR22913:SF7">
    <property type="entry name" value="HYALURONAN SYNTHASE 2"/>
    <property type="match status" value="1"/>
</dbReference>
<dbReference type="Pfam" id="PF03142">
    <property type="entry name" value="Chitin_synth_2"/>
    <property type="match status" value="1"/>
</dbReference>
<dbReference type="Pfam" id="PF00535">
    <property type="entry name" value="Glycos_transf_2"/>
    <property type="match status" value="1"/>
</dbReference>
<dbReference type="SUPFAM" id="SSF53448">
    <property type="entry name" value="Nucleotide-diphospho-sugar transferases"/>
    <property type="match status" value="1"/>
</dbReference>
<feature type="chain" id="PRO_0000197175" description="Hyaluronan synthase 2">
    <location>
        <begin position="1"/>
        <end position="552"/>
    </location>
</feature>
<feature type="topological domain" description="Cytoplasmic" evidence="3">
    <location>
        <begin position="1"/>
        <end position="11"/>
    </location>
</feature>
<feature type="transmembrane region" description="Helical; Name=1" evidence="3">
    <location>
        <begin position="12"/>
        <end position="32"/>
    </location>
</feature>
<feature type="topological domain" description="Extracellular" evidence="3">
    <location>
        <begin position="33"/>
        <end position="45"/>
    </location>
</feature>
<feature type="transmembrane region" description="Helical; Name=2" evidence="3">
    <location>
        <begin position="46"/>
        <end position="66"/>
    </location>
</feature>
<feature type="topological domain" description="Cytoplasmic" evidence="3">
    <location>
        <begin position="67"/>
        <end position="374"/>
    </location>
</feature>
<feature type="transmembrane region" description="Helical; Name=3" evidence="3">
    <location>
        <begin position="375"/>
        <end position="395"/>
    </location>
</feature>
<feature type="topological domain" description="Extracellular" evidence="3">
    <location>
        <begin position="396"/>
        <end position="402"/>
    </location>
</feature>
<feature type="transmembrane region" description="Helical; Name=4" evidence="3">
    <location>
        <begin position="403"/>
        <end position="423"/>
    </location>
</feature>
<feature type="topological domain" description="Cytoplasmic" evidence="3">
    <location>
        <begin position="424"/>
        <end position="429"/>
    </location>
</feature>
<feature type="transmembrane region" description="Helical; Name=5" evidence="3">
    <location>
        <begin position="430"/>
        <end position="450"/>
    </location>
</feature>
<feature type="topological domain" description="Extracellular" evidence="3">
    <location>
        <begin position="451"/>
        <end position="475"/>
    </location>
</feature>
<feature type="transmembrane region" description="Helical; Name=6" evidence="3">
    <location>
        <begin position="476"/>
        <end position="496"/>
    </location>
</feature>
<feature type="topological domain" description="Cytoplasmic" evidence="3">
    <location>
        <begin position="497"/>
        <end position="510"/>
    </location>
</feature>
<feature type="transmembrane region" description="Helical; Name=7" evidence="3">
    <location>
        <begin position="511"/>
        <end position="531"/>
    </location>
</feature>
<feature type="topological domain" description="Extracellular" evidence="3">
    <location>
        <begin position="532"/>
        <end position="552"/>
    </location>
</feature>
<feature type="modified residue" description="Phosphothreonine" evidence="2">
    <location>
        <position position="110"/>
    </location>
</feature>
<feature type="modified residue" description="Phosphothreonine" evidence="2">
    <location>
        <position position="328"/>
    </location>
</feature>
<feature type="glycosylation site" description="O-linked (GlcNAc) serine" evidence="2">
    <location>
        <position position="221"/>
    </location>
</feature>
<feature type="cross-link" description="Glycyl lysine isopeptide (Lys-Gly) (interchain with G-Cter in ubiquitin)" evidence="2">
    <location>
        <position position="190"/>
    </location>
</feature>
<name>HYAS2_RAT</name>
<organism>
    <name type="scientific">Rattus norvegicus</name>
    <name type="common">Rat</name>
    <dbReference type="NCBI Taxonomy" id="10116"/>
    <lineage>
        <taxon>Eukaryota</taxon>
        <taxon>Metazoa</taxon>
        <taxon>Chordata</taxon>
        <taxon>Craniata</taxon>
        <taxon>Vertebrata</taxon>
        <taxon>Euteleostomi</taxon>
        <taxon>Mammalia</taxon>
        <taxon>Eutheria</taxon>
        <taxon>Euarchontoglires</taxon>
        <taxon>Glires</taxon>
        <taxon>Rodentia</taxon>
        <taxon>Myomorpha</taxon>
        <taxon>Muroidea</taxon>
        <taxon>Muridae</taxon>
        <taxon>Murinae</taxon>
        <taxon>Rattus</taxon>
    </lineage>
</organism>
<gene>
    <name type="primary">Has2</name>
</gene>
<protein>
    <recommendedName>
        <fullName>Hyaluronan synthase 2</fullName>
        <ecNumber evidence="2">2.4.1.212</ecNumber>
    </recommendedName>
    <alternativeName>
        <fullName>Hyaluronate synthase 2</fullName>
    </alternativeName>
    <alternativeName>
        <fullName>Hyaluronic acid synthase 2</fullName>
        <shortName>HA synthase 2</shortName>
    </alternativeName>
</protein>